<protein>
    <recommendedName>
        <fullName>Mitochondrial zinc maintenance protein 1, mitochondrial</fullName>
    </recommendedName>
</protein>
<gene>
    <name type="primary">MZM1</name>
    <name type="ordered locus">YALI0A07799g</name>
</gene>
<reference key="1">
    <citation type="journal article" date="2004" name="Nature">
        <title>Genome evolution in yeasts.</title>
        <authorList>
            <person name="Dujon B."/>
            <person name="Sherman D."/>
            <person name="Fischer G."/>
            <person name="Durrens P."/>
            <person name="Casaregola S."/>
            <person name="Lafontaine I."/>
            <person name="de Montigny J."/>
            <person name="Marck C."/>
            <person name="Neuveglise C."/>
            <person name="Talla E."/>
            <person name="Goffard N."/>
            <person name="Frangeul L."/>
            <person name="Aigle M."/>
            <person name="Anthouard V."/>
            <person name="Babour A."/>
            <person name="Barbe V."/>
            <person name="Barnay S."/>
            <person name="Blanchin S."/>
            <person name="Beckerich J.-M."/>
            <person name="Beyne E."/>
            <person name="Bleykasten C."/>
            <person name="Boisrame A."/>
            <person name="Boyer J."/>
            <person name="Cattolico L."/>
            <person name="Confanioleri F."/>
            <person name="de Daruvar A."/>
            <person name="Despons L."/>
            <person name="Fabre E."/>
            <person name="Fairhead C."/>
            <person name="Ferry-Dumazet H."/>
            <person name="Groppi A."/>
            <person name="Hantraye F."/>
            <person name="Hennequin C."/>
            <person name="Jauniaux N."/>
            <person name="Joyet P."/>
            <person name="Kachouri R."/>
            <person name="Kerrest A."/>
            <person name="Koszul R."/>
            <person name="Lemaire M."/>
            <person name="Lesur I."/>
            <person name="Ma L."/>
            <person name="Muller H."/>
            <person name="Nicaud J.-M."/>
            <person name="Nikolski M."/>
            <person name="Oztas S."/>
            <person name="Ozier-Kalogeropoulos O."/>
            <person name="Pellenz S."/>
            <person name="Potier S."/>
            <person name="Richard G.-F."/>
            <person name="Straub M.-L."/>
            <person name="Suleau A."/>
            <person name="Swennen D."/>
            <person name="Tekaia F."/>
            <person name="Wesolowski-Louvel M."/>
            <person name="Westhof E."/>
            <person name="Wirth B."/>
            <person name="Zeniou-Meyer M."/>
            <person name="Zivanovic Y."/>
            <person name="Bolotin-Fukuhara M."/>
            <person name="Thierry A."/>
            <person name="Bouchier C."/>
            <person name="Caudron B."/>
            <person name="Scarpelli C."/>
            <person name="Gaillardin C."/>
            <person name="Weissenbach J."/>
            <person name="Wincker P."/>
            <person name="Souciet J.-L."/>
        </authorList>
    </citation>
    <scope>NUCLEOTIDE SEQUENCE [LARGE SCALE GENOMIC DNA]</scope>
    <source>
        <strain>CLIB 122 / E 150</strain>
    </source>
</reference>
<dbReference type="EMBL" id="CR382127">
    <property type="protein sequence ID" value="CAG83779.1"/>
    <property type="molecule type" value="Genomic_DNA"/>
</dbReference>
<dbReference type="RefSeq" id="XP_499853.1">
    <property type="nucleotide sequence ID" value="XM_499853.1"/>
</dbReference>
<dbReference type="SMR" id="Q6CHK8"/>
<dbReference type="FunCoup" id="Q6CHK8">
    <property type="interactions" value="12"/>
</dbReference>
<dbReference type="STRING" id="284591.Q6CHK8"/>
<dbReference type="EnsemblFungi" id="CAG83779">
    <property type="protein sequence ID" value="CAG83779"/>
    <property type="gene ID" value="YALI0_A07799g"/>
</dbReference>
<dbReference type="KEGG" id="yli:2905747"/>
<dbReference type="VEuPathDB" id="FungiDB:YALI0_A07799g"/>
<dbReference type="HOGENOM" id="CLU_147114_2_2_1"/>
<dbReference type="InParanoid" id="Q6CHK8"/>
<dbReference type="OMA" id="KYKLRIH"/>
<dbReference type="OrthoDB" id="83349at4891"/>
<dbReference type="Proteomes" id="UP000001300">
    <property type="component" value="Chromosome A"/>
</dbReference>
<dbReference type="GO" id="GO:0005759">
    <property type="term" value="C:mitochondrial matrix"/>
    <property type="evidence" value="ECO:0000318"/>
    <property type="project" value="GO_Central"/>
</dbReference>
<dbReference type="GO" id="GO:0044183">
    <property type="term" value="F:protein folding chaperone"/>
    <property type="evidence" value="ECO:0000318"/>
    <property type="project" value="GO_Central"/>
</dbReference>
<dbReference type="GO" id="GO:0034551">
    <property type="term" value="P:mitochondrial respiratory chain complex III assembly"/>
    <property type="evidence" value="ECO:0000318"/>
    <property type="project" value="GO_Central"/>
</dbReference>
<dbReference type="CDD" id="cd20267">
    <property type="entry name" value="Complex1_LYR_LYRM7"/>
    <property type="match status" value="1"/>
</dbReference>
<dbReference type="InterPro" id="IPR045298">
    <property type="entry name" value="Complex1_LYR_LYRM7"/>
</dbReference>
<dbReference type="InterPro" id="IPR050435">
    <property type="entry name" value="MZM1/LYRM7"/>
</dbReference>
<dbReference type="PANTHER" id="PTHR46749">
    <property type="entry name" value="COMPLEX III ASSEMBLY FACTOR LYRM7"/>
    <property type="match status" value="1"/>
</dbReference>
<dbReference type="PANTHER" id="PTHR46749:SF1">
    <property type="entry name" value="COMPLEX III ASSEMBLY FACTOR LYRM7"/>
    <property type="match status" value="1"/>
</dbReference>
<comment type="function">
    <text evidence="1">Assembly factor required for Rieske Fe-S protein RIP1 incorporation into the cytochrome b-c1 (CIII) complex. Functions as a chaperone, binding to this subunit within the mitochondrial matrix and stabilizing it prior to its translocation and insertion into the late CIII dimeric intermediate within the mitochondrial inner membrane. Modulates the mitochondrial matrix zinc pool (By similarity).</text>
</comment>
<comment type="subunit">
    <text evidence="1">Interacts with RIP1.</text>
</comment>
<comment type="subcellular location">
    <subcellularLocation>
        <location evidence="1">Mitochondrion matrix</location>
    </subcellularLocation>
</comment>
<comment type="similarity">
    <text evidence="4">Belongs to the complex I LYR family. MZM1 subfamily.</text>
</comment>
<proteinExistence type="inferred from homology"/>
<feature type="transit peptide" description="Mitochondrion" evidence="2">
    <location>
        <begin position="1"/>
        <end status="unknown"/>
    </location>
</feature>
<feature type="chain" id="PRO_0000405520" description="Mitochondrial zinc maintenance protein 1, mitochondrial">
    <location>
        <begin status="unknown"/>
        <end position="118"/>
    </location>
</feature>
<feature type="region of interest" description="Disordered" evidence="3">
    <location>
        <begin position="70"/>
        <end position="118"/>
    </location>
</feature>
<feature type="compositionally biased region" description="Basic and acidic residues" evidence="3">
    <location>
        <begin position="74"/>
        <end position="90"/>
    </location>
</feature>
<feature type="compositionally biased region" description="Basic residues" evidence="3">
    <location>
        <begin position="106"/>
        <end position="118"/>
    </location>
</feature>
<name>MZM1_YARLI</name>
<keyword id="KW-0143">Chaperone</keyword>
<keyword id="KW-0496">Mitochondrion</keyword>
<keyword id="KW-1185">Reference proteome</keyword>
<keyword id="KW-0809">Transit peptide</keyword>
<organism>
    <name type="scientific">Yarrowia lipolytica (strain CLIB 122 / E 150)</name>
    <name type="common">Yeast</name>
    <name type="synonym">Candida lipolytica</name>
    <dbReference type="NCBI Taxonomy" id="284591"/>
    <lineage>
        <taxon>Eukaryota</taxon>
        <taxon>Fungi</taxon>
        <taxon>Dikarya</taxon>
        <taxon>Ascomycota</taxon>
        <taxon>Saccharomycotina</taxon>
        <taxon>Dipodascomycetes</taxon>
        <taxon>Dipodascales</taxon>
        <taxon>Dipodascales incertae sedis</taxon>
        <taxon>Yarrowia</taxon>
    </lineage>
</organism>
<sequence length="118" mass="13303">MSQGLTAYRNVLRAANLAFKNDHFVLGQAKANIRKGFEDGRKLDPKDEDVKVRLEHINGVAYVLRTQVVQGQKHNPDEEKYQLNLHKDSEMGDNESIKSPPPMPTKGKKGKKVKCCSE</sequence>
<accession>Q6CHK8</accession>
<evidence type="ECO:0000250" key="1"/>
<evidence type="ECO:0000255" key="2"/>
<evidence type="ECO:0000256" key="3">
    <source>
        <dbReference type="SAM" id="MobiDB-lite"/>
    </source>
</evidence>
<evidence type="ECO:0000305" key="4"/>